<evidence type="ECO:0000255" key="1">
    <source>
        <dbReference type="HAMAP-Rule" id="MF_01147"/>
    </source>
</evidence>
<dbReference type="EC" id="2.5.1.145" evidence="1"/>
<dbReference type="EMBL" id="CP001191">
    <property type="protein sequence ID" value="ACI56028.1"/>
    <property type="molecule type" value="Genomic_DNA"/>
</dbReference>
<dbReference type="RefSeq" id="WP_012558493.1">
    <property type="nucleotide sequence ID" value="NC_011369.1"/>
</dbReference>
<dbReference type="SMR" id="B5ZY45"/>
<dbReference type="STRING" id="395492.Rleg2_2758"/>
<dbReference type="KEGG" id="rlt:Rleg2_2758"/>
<dbReference type="eggNOG" id="COG0682">
    <property type="taxonomic scope" value="Bacteria"/>
</dbReference>
<dbReference type="HOGENOM" id="CLU_013386_1_0_5"/>
<dbReference type="UniPathway" id="UPA00664"/>
<dbReference type="Proteomes" id="UP000008330">
    <property type="component" value="Chromosome"/>
</dbReference>
<dbReference type="GO" id="GO:0005886">
    <property type="term" value="C:plasma membrane"/>
    <property type="evidence" value="ECO:0007669"/>
    <property type="project" value="UniProtKB-SubCell"/>
</dbReference>
<dbReference type="GO" id="GO:0008961">
    <property type="term" value="F:phosphatidylglycerol-prolipoprotein diacylglyceryl transferase activity"/>
    <property type="evidence" value="ECO:0007669"/>
    <property type="project" value="UniProtKB-UniRule"/>
</dbReference>
<dbReference type="GO" id="GO:0042158">
    <property type="term" value="P:lipoprotein biosynthetic process"/>
    <property type="evidence" value="ECO:0007669"/>
    <property type="project" value="UniProtKB-UniRule"/>
</dbReference>
<dbReference type="HAMAP" id="MF_01147">
    <property type="entry name" value="Lgt"/>
    <property type="match status" value="1"/>
</dbReference>
<dbReference type="InterPro" id="IPR001640">
    <property type="entry name" value="Lgt"/>
</dbReference>
<dbReference type="NCBIfam" id="TIGR00544">
    <property type="entry name" value="lgt"/>
    <property type="match status" value="1"/>
</dbReference>
<dbReference type="PANTHER" id="PTHR30589:SF0">
    <property type="entry name" value="PHOSPHATIDYLGLYCEROL--PROLIPOPROTEIN DIACYLGLYCERYL TRANSFERASE"/>
    <property type="match status" value="1"/>
</dbReference>
<dbReference type="PANTHER" id="PTHR30589">
    <property type="entry name" value="PROLIPOPROTEIN DIACYLGLYCERYL TRANSFERASE"/>
    <property type="match status" value="1"/>
</dbReference>
<dbReference type="Pfam" id="PF01790">
    <property type="entry name" value="LGT"/>
    <property type="match status" value="1"/>
</dbReference>
<dbReference type="PROSITE" id="PS01311">
    <property type="entry name" value="LGT"/>
    <property type="match status" value="1"/>
</dbReference>
<sequence>MPTAANLLAIMPFPDIDPIAFSIGPLAIHWYGLAYVAGILLGWAYARRLAANESLWPGNASPMTRTQLDDFIVWAALGVVLGGRLGYIFFYDLPAVLRSPVRALEIWNGGMSFHGGLTGTTIAMIIFARRNGIPIWSLFDIVATVVPFGLFFGRIANFINGELWGRLTDVPWAVVFPTGGPFARHPSQLYEAGLEGIVLLLVLAALVYGMRALKSPGFITGVFVCGYALSRIFVEFFREPDAQLGYLLGTNWLTMGMVLSSPMILLGLWAMLRARRQAALQL</sequence>
<reference key="1">
    <citation type="journal article" date="2010" name="Stand. Genomic Sci.">
        <title>Complete genome sequence of Rhizobium leguminosarum bv trifolii strain WSM2304, an effective microsymbiont of the South American clover Trifolium polymorphum.</title>
        <authorList>
            <person name="Reeve W."/>
            <person name="O'Hara G."/>
            <person name="Chain P."/>
            <person name="Ardley J."/>
            <person name="Brau L."/>
            <person name="Nandesena K."/>
            <person name="Tiwari R."/>
            <person name="Malfatti S."/>
            <person name="Kiss H."/>
            <person name="Lapidus A."/>
            <person name="Copeland A."/>
            <person name="Nolan M."/>
            <person name="Land M."/>
            <person name="Ivanova N."/>
            <person name="Mavromatis K."/>
            <person name="Markowitz V."/>
            <person name="Kyrpides N."/>
            <person name="Melino V."/>
            <person name="Denton M."/>
            <person name="Yates R."/>
            <person name="Howieson J."/>
        </authorList>
    </citation>
    <scope>NUCLEOTIDE SEQUENCE [LARGE SCALE GENOMIC DNA]</scope>
    <source>
        <strain>WSM2304</strain>
    </source>
</reference>
<keyword id="KW-0997">Cell inner membrane</keyword>
<keyword id="KW-1003">Cell membrane</keyword>
<keyword id="KW-0472">Membrane</keyword>
<keyword id="KW-1185">Reference proteome</keyword>
<keyword id="KW-0808">Transferase</keyword>
<keyword id="KW-0812">Transmembrane</keyword>
<keyword id="KW-1133">Transmembrane helix</keyword>
<comment type="function">
    <text evidence="1">Catalyzes the transfer of the diacylglyceryl group from phosphatidylglycerol to the sulfhydryl group of the N-terminal cysteine of a prolipoprotein, the first step in the formation of mature lipoproteins.</text>
</comment>
<comment type="catalytic activity">
    <reaction evidence="1">
        <text>L-cysteinyl-[prolipoprotein] + a 1,2-diacyl-sn-glycero-3-phospho-(1'-sn-glycerol) = an S-1,2-diacyl-sn-glyceryl-L-cysteinyl-[prolipoprotein] + sn-glycerol 1-phosphate + H(+)</text>
        <dbReference type="Rhea" id="RHEA:56712"/>
        <dbReference type="Rhea" id="RHEA-COMP:14679"/>
        <dbReference type="Rhea" id="RHEA-COMP:14680"/>
        <dbReference type="ChEBI" id="CHEBI:15378"/>
        <dbReference type="ChEBI" id="CHEBI:29950"/>
        <dbReference type="ChEBI" id="CHEBI:57685"/>
        <dbReference type="ChEBI" id="CHEBI:64716"/>
        <dbReference type="ChEBI" id="CHEBI:140658"/>
        <dbReference type="EC" id="2.5.1.145"/>
    </reaction>
</comment>
<comment type="pathway">
    <text evidence="1">Protein modification; lipoprotein biosynthesis (diacylglyceryl transfer).</text>
</comment>
<comment type="subcellular location">
    <subcellularLocation>
        <location evidence="1">Cell inner membrane</location>
        <topology evidence="1">Multi-pass membrane protein</topology>
    </subcellularLocation>
</comment>
<comment type="similarity">
    <text evidence="1">Belongs to the Lgt family.</text>
</comment>
<name>LGT_RHILW</name>
<protein>
    <recommendedName>
        <fullName evidence="1">Phosphatidylglycerol--prolipoprotein diacylglyceryl transferase</fullName>
        <ecNumber evidence="1">2.5.1.145</ecNumber>
    </recommendedName>
</protein>
<feature type="chain" id="PRO_1000137448" description="Phosphatidylglycerol--prolipoprotein diacylglyceryl transferase">
    <location>
        <begin position="1"/>
        <end position="282"/>
    </location>
</feature>
<feature type="transmembrane region" description="Helical" evidence="1">
    <location>
        <begin position="23"/>
        <end position="43"/>
    </location>
</feature>
<feature type="transmembrane region" description="Helical" evidence="1">
    <location>
        <begin position="71"/>
        <end position="91"/>
    </location>
</feature>
<feature type="transmembrane region" description="Helical" evidence="1">
    <location>
        <begin position="106"/>
        <end position="126"/>
    </location>
</feature>
<feature type="transmembrane region" description="Helical" evidence="1">
    <location>
        <begin position="132"/>
        <end position="152"/>
    </location>
</feature>
<feature type="transmembrane region" description="Helical" evidence="1">
    <location>
        <begin position="189"/>
        <end position="209"/>
    </location>
</feature>
<feature type="transmembrane region" description="Helical" evidence="1">
    <location>
        <begin position="217"/>
        <end position="237"/>
    </location>
</feature>
<feature type="transmembrane region" description="Helical" evidence="1">
    <location>
        <begin position="252"/>
        <end position="272"/>
    </location>
</feature>
<feature type="binding site" evidence="1">
    <location>
        <position position="154"/>
    </location>
    <ligand>
        <name>a 1,2-diacyl-sn-glycero-3-phospho-(1'-sn-glycerol)</name>
        <dbReference type="ChEBI" id="CHEBI:64716"/>
    </ligand>
</feature>
<organism>
    <name type="scientific">Rhizobium leguminosarum bv. trifolii (strain WSM2304)</name>
    <dbReference type="NCBI Taxonomy" id="395492"/>
    <lineage>
        <taxon>Bacteria</taxon>
        <taxon>Pseudomonadati</taxon>
        <taxon>Pseudomonadota</taxon>
        <taxon>Alphaproteobacteria</taxon>
        <taxon>Hyphomicrobiales</taxon>
        <taxon>Rhizobiaceae</taxon>
        <taxon>Rhizobium/Agrobacterium group</taxon>
        <taxon>Rhizobium</taxon>
    </lineage>
</organism>
<proteinExistence type="inferred from homology"/>
<accession>B5ZY45</accession>
<gene>
    <name evidence="1" type="primary">lgt</name>
    <name type="ordered locus">Rleg2_2758</name>
</gene>